<feature type="chain" id="PRO_0000334697" description="Golgi-associated RAB2 interactor protein 5A">
    <location>
        <begin position="1"/>
        <end position="247"/>
    </location>
</feature>
<feature type="region of interest" description="Disordered" evidence="2">
    <location>
        <begin position="1"/>
        <end position="22"/>
    </location>
</feature>
<feature type="region of interest" description="Disordered" evidence="2">
    <location>
        <begin position="60"/>
        <end position="92"/>
    </location>
</feature>
<feature type="compositionally biased region" description="Pro residues" evidence="2">
    <location>
        <begin position="1"/>
        <end position="16"/>
    </location>
</feature>
<feature type="splice variant" id="VSP_033760" description="In isoform 2." evidence="3">
    <location>
        <begin position="121"/>
        <end position="136"/>
    </location>
</feature>
<feature type="sequence variant" id="VAR_043465" description="In dbSNP:rs736769.">
    <original>S</original>
    <variation>I</variation>
    <location>
        <position position="206"/>
    </location>
</feature>
<protein>
    <recommendedName>
        <fullName evidence="4">Golgi-associated RAB2 interactor protein 5A</fullName>
    </recommendedName>
</protein>
<keyword id="KW-0025">Alternative splicing</keyword>
<keyword id="KW-0333">Golgi apparatus</keyword>
<keyword id="KW-1267">Proteomics identification</keyword>
<keyword id="KW-1185">Reference proteome</keyword>
<reference key="1">
    <citation type="submission" date="2005-07" db="EMBL/GenBank/DDBJ databases">
        <authorList>
            <person name="Mural R.J."/>
            <person name="Istrail S."/>
            <person name="Sutton G.G."/>
            <person name="Florea L."/>
            <person name="Halpern A.L."/>
            <person name="Mobarry C.M."/>
            <person name="Lippert R."/>
            <person name="Walenz B."/>
            <person name="Shatkay H."/>
            <person name="Dew I."/>
            <person name="Miller J.R."/>
            <person name="Flanigan M.J."/>
            <person name="Edwards N.J."/>
            <person name="Bolanos R."/>
            <person name="Fasulo D."/>
            <person name="Halldorsson B.V."/>
            <person name="Hannenhalli S."/>
            <person name="Turner R."/>
            <person name="Yooseph S."/>
            <person name="Lu F."/>
            <person name="Nusskern D.R."/>
            <person name="Shue B.C."/>
            <person name="Zheng X.H."/>
            <person name="Zhong F."/>
            <person name="Delcher A.L."/>
            <person name="Huson D.H."/>
            <person name="Kravitz S.A."/>
            <person name="Mouchard L."/>
            <person name="Reinert K."/>
            <person name="Remington K.A."/>
            <person name="Clark A.G."/>
            <person name="Waterman M.S."/>
            <person name="Eichler E.E."/>
            <person name="Adams M.D."/>
            <person name="Hunkapiller M.W."/>
            <person name="Myers E.W."/>
            <person name="Venter J.C."/>
        </authorList>
    </citation>
    <scope>NUCLEOTIDE SEQUENCE [LARGE SCALE GENOMIC DNA]</scope>
</reference>
<reference key="2">
    <citation type="journal article" date="2004" name="Genome Res.">
        <title>The status, quality, and expansion of the NIH full-length cDNA project: the Mammalian Gene Collection (MGC).</title>
        <authorList>
            <consortium name="The MGC Project Team"/>
        </authorList>
    </citation>
    <scope>NUCLEOTIDE SEQUENCE [LARGE SCALE MRNA] (ISOFORM 2)</scope>
    <scope>NUCLEOTIDE SEQUENCE [LARGE SCALE MRNA] OF 31-247 (ISOFORM 1)</scope>
    <source>
        <tissue>Brain</tissue>
        <tissue>Ovary</tissue>
        <tissue>Pancreas</tissue>
    </source>
</reference>
<evidence type="ECO:0000250" key="1">
    <source>
        <dbReference type="UniProtKB" id="A1L3C1"/>
    </source>
</evidence>
<evidence type="ECO:0000256" key="2">
    <source>
        <dbReference type="SAM" id="MobiDB-lite"/>
    </source>
</evidence>
<evidence type="ECO:0000303" key="3">
    <source>
    </source>
</evidence>
<evidence type="ECO:0000305" key="4"/>
<evidence type="ECO:0000312" key="5">
    <source>
        <dbReference type="HGNC" id="HGNC:25107"/>
    </source>
</evidence>
<accession>Q6IPT2</accession>
<accession>Q96EJ5</accession>
<accession>Q9BSM9</accession>
<organism>
    <name type="scientific">Homo sapiens</name>
    <name type="common">Human</name>
    <dbReference type="NCBI Taxonomy" id="9606"/>
    <lineage>
        <taxon>Eukaryota</taxon>
        <taxon>Metazoa</taxon>
        <taxon>Chordata</taxon>
        <taxon>Craniata</taxon>
        <taxon>Vertebrata</taxon>
        <taxon>Euteleostomi</taxon>
        <taxon>Mammalia</taxon>
        <taxon>Eutheria</taxon>
        <taxon>Euarchontoglires</taxon>
        <taxon>Primates</taxon>
        <taxon>Haplorrhini</taxon>
        <taxon>Catarrhini</taxon>
        <taxon>Hominidae</taxon>
        <taxon>Homo</taxon>
    </lineage>
</organism>
<proteinExistence type="evidence at protein level"/>
<comment type="function">
    <text evidence="1">RAB2B effector protein which promotes cytosolic DNA-induced innate immune responses. Regulates IFN responses against DNA viruses by regulating the CGAS-STING signaling axis.</text>
</comment>
<comment type="subunit">
    <text evidence="1">Interacts (via N-terminus) with RAB2B (in GTP-bound form).</text>
</comment>
<comment type="subcellular location">
    <subcellularLocation>
        <location evidence="1">Golgi apparatus</location>
    </subcellularLocation>
</comment>
<comment type="alternative products">
    <event type="alternative splicing"/>
    <isoform>
        <id>Q6IPT2-1</id>
        <name>1</name>
        <sequence type="displayed"/>
    </isoform>
    <isoform>
        <id>Q6IPT2-2</id>
        <name>2</name>
        <sequence type="described" ref="VSP_033760"/>
    </isoform>
</comment>
<comment type="similarity">
    <text evidence="4">Belongs to the GARIN family.</text>
</comment>
<sequence>MGPPLWPDLQEPPPPGTSSQIRSPLLCDVIKPAPHHDVTVRVVPPPRFLPLLLRPLPSDGDIAMRRDRGPKPALGGAGEVEPGGMAASPTGRPRRLQRYLQSGEFDQFRDFPIFESNFVQFCPDIYPAPTSDLWPQVTRLGEVANEVTMGVAASSPALELPDLLLLAGPAKENGHLQLFGLFPLKFVQLFVHDKSRCQLEVKLNTSRTFYLQLRAPLKTRDREFGQWVRLLYRLRFLSASAVPFTQE</sequence>
<dbReference type="EMBL" id="CH471135">
    <property type="protein sequence ID" value="EAW71869.1"/>
    <property type="molecule type" value="Genomic_DNA"/>
</dbReference>
<dbReference type="EMBL" id="BC004941">
    <property type="protein sequence ID" value="AAH04941.1"/>
    <property type="molecule type" value="mRNA"/>
</dbReference>
<dbReference type="EMBL" id="BC012203">
    <property type="protein sequence ID" value="AAH12203.1"/>
    <property type="molecule type" value="mRNA"/>
</dbReference>
<dbReference type="EMBL" id="BC071737">
    <property type="protein sequence ID" value="AAH71737.1"/>
    <property type="molecule type" value="mRNA"/>
</dbReference>
<dbReference type="CCDS" id="CCDS33081.1">
    <molecule id="Q6IPT2-2"/>
</dbReference>
<dbReference type="CCDS" id="CCDS77337.1">
    <molecule id="Q6IPT2-1"/>
</dbReference>
<dbReference type="RefSeq" id="NP_001295358.1">
    <molecule id="Q6IPT2-1"/>
    <property type="nucleotide sequence ID" value="NM_001308429.2"/>
</dbReference>
<dbReference type="RefSeq" id="NP_612420.1">
    <molecule id="Q6IPT2-2"/>
    <property type="nucleotide sequence ID" value="NM_138411.3"/>
</dbReference>
<dbReference type="BioGRID" id="125198">
    <property type="interactions" value="3"/>
</dbReference>
<dbReference type="FunCoup" id="Q6IPT2">
    <property type="interactions" value="103"/>
</dbReference>
<dbReference type="IntAct" id="Q6IPT2">
    <property type="interactions" value="1"/>
</dbReference>
<dbReference type="STRING" id="9606.ENSP00000472421"/>
<dbReference type="PhosphoSitePlus" id="Q6IPT2"/>
<dbReference type="BioMuta" id="FAM71E1"/>
<dbReference type="DMDM" id="189037931"/>
<dbReference type="jPOST" id="Q6IPT2"/>
<dbReference type="MassIVE" id="Q6IPT2"/>
<dbReference type="PaxDb" id="9606-ENSP00000471272"/>
<dbReference type="PeptideAtlas" id="Q6IPT2"/>
<dbReference type="ProteomicsDB" id="66457">
    <molecule id="Q6IPT2-1"/>
</dbReference>
<dbReference type="ProteomicsDB" id="66458">
    <molecule id="Q6IPT2-2"/>
</dbReference>
<dbReference type="Antibodypedia" id="68558">
    <property type="antibodies" value="1 antibodies from 1 providers"/>
</dbReference>
<dbReference type="DNASU" id="112703"/>
<dbReference type="Ensembl" id="ENST00000595790.5">
    <molecule id="Q6IPT2-2"/>
    <property type="protein sequence ID" value="ENSP00000471272.2"/>
    <property type="gene ID" value="ENSG00000142530.11"/>
</dbReference>
<dbReference type="Ensembl" id="ENST00000600100.6">
    <molecule id="Q6IPT2-1"/>
    <property type="protein sequence ID" value="ENSP00000472421.2"/>
    <property type="gene ID" value="ENSG00000142530.11"/>
</dbReference>
<dbReference type="GeneID" id="112703"/>
<dbReference type="KEGG" id="hsa:112703"/>
<dbReference type="MANE-Select" id="ENST00000600100.6">
    <property type="protein sequence ID" value="ENSP00000472421.2"/>
    <property type="RefSeq nucleotide sequence ID" value="NM_001308429.2"/>
    <property type="RefSeq protein sequence ID" value="NP_001295358.1"/>
</dbReference>
<dbReference type="UCSC" id="uc002psg.3">
    <molecule id="Q6IPT2-1"/>
    <property type="organism name" value="human"/>
</dbReference>
<dbReference type="AGR" id="HGNC:25107"/>
<dbReference type="CTD" id="112703"/>
<dbReference type="GeneCards" id="GARIN5A"/>
<dbReference type="HGNC" id="HGNC:25107">
    <property type="gene designation" value="GARIN5A"/>
</dbReference>
<dbReference type="HPA" id="ENSG00000142530">
    <property type="expression patterns" value="Tissue enriched (testis)"/>
</dbReference>
<dbReference type="MalaCards" id="GARIN5A"/>
<dbReference type="MIM" id="619890">
    <property type="type" value="gene"/>
</dbReference>
<dbReference type="neXtProt" id="NX_Q6IPT2"/>
<dbReference type="OpenTargets" id="ENSG00000142530"/>
<dbReference type="VEuPathDB" id="HostDB:ENSG00000142530"/>
<dbReference type="eggNOG" id="ENOG502S585">
    <property type="taxonomic scope" value="Eukaryota"/>
</dbReference>
<dbReference type="GeneTree" id="ENSGT00940000162319"/>
<dbReference type="InParanoid" id="Q6IPT2"/>
<dbReference type="OMA" id="VQFCPHI"/>
<dbReference type="OrthoDB" id="9940031at2759"/>
<dbReference type="PAN-GO" id="Q6IPT2">
    <property type="GO annotations" value="0 GO annotations based on evolutionary models"/>
</dbReference>
<dbReference type="PhylomeDB" id="Q6IPT2"/>
<dbReference type="TreeFam" id="TF336050"/>
<dbReference type="PathwayCommons" id="Q6IPT2"/>
<dbReference type="BioGRID-ORCS" id="112703">
    <property type="hits" value="35 hits in 1153 CRISPR screens"/>
</dbReference>
<dbReference type="GenomeRNAi" id="112703"/>
<dbReference type="Pharos" id="Q6IPT2">
    <property type="development level" value="Tdark"/>
</dbReference>
<dbReference type="PRO" id="PR:Q6IPT2"/>
<dbReference type="Proteomes" id="UP000005640">
    <property type="component" value="Chromosome 19"/>
</dbReference>
<dbReference type="RNAct" id="Q6IPT2">
    <property type="molecule type" value="protein"/>
</dbReference>
<dbReference type="Bgee" id="ENSG00000142530">
    <property type="expression patterns" value="Expressed in left testis and 114 other cell types or tissues"/>
</dbReference>
<dbReference type="ExpressionAtlas" id="Q6IPT2">
    <property type="expression patterns" value="baseline and differential"/>
</dbReference>
<dbReference type="GO" id="GO:0005794">
    <property type="term" value="C:Golgi apparatus"/>
    <property type="evidence" value="ECO:0000250"/>
    <property type="project" value="UniProtKB"/>
</dbReference>
<dbReference type="GO" id="GO:0051607">
    <property type="term" value="P:defense response to virus"/>
    <property type="evidence" value="ECO:0000250"/>
    <property type="project" value="UniProtKB"/>
</dbReference>
<dbReference type="GO" id="GO:0045087">
    <property type="term" value="P:innate immune response"/>
    <property type="evidence" value="ECO:0000250"/>
    <property type="project" value="UniProtKB"/>
</dbReference>
<dbReference type="GO" id="GO:0032481">
    <property type="term" value="P:positive regulation of type I interferon production"/>
    <property type="evidence" value="ECO:0000250"/>
    <property type="project" value="UniProtKB"/>
</dbReference>
<dbReference type="InterPro" id="IPR022168">
    <property type="entry name" value="GARIL-like_Rab2B-bd"/>
</dbReference>
<dbReference type="PANTHER" id="PTHR22574">
    <property type="match status" value="1"/>
</dbReference>
<dbReference type="PANTHER" id="PTHR22574:SF5">
    <property type="entry name" value="GOLGI-ASSOCIATED RAB2 INTERACTOR PROTEIN 5A"/>
    <property type="match status" value="1"/>
</dbReference>
<dbReference type="Pfam" id="PF12480">
    <property type="entry name" value="GARIL_Rab2_bd"/>
    <property type="match status" value="1"/>
</dbReference>
<gene>
    <name evidence="5" type="primary">GARIN5A</name>
    <name type="synonym">FAM71E1</name>
</gene>
<name>GAR5A_HUMAN</name>